<feature type="chain" id="PRO_0000124837" description="Prefoldin subunit 2">
    <location>
        <begin position="1"/>
        <end position="141"/>
    </location>
</feature>
<dbReference type="EMBL" id="FO080156">
    <property type="protein sequence ID" value="CCD61681.1"/>
    <property type="molecule type" value="Genomic_DNA"/>
</dbReference>
<dbReference type="RefSeq" id="NP_494764.1">
    <property type="nucleotide sequence ID" value="NM_062363.8"/>
</dbReference>
<dbReference type="SMR" id="Q9N5M2"/>
<dbReference type="BioGRID" id="39124">
    <property type="interactions" value="19"/>
</dbReference>
<dbReference type="FunCoup" id="Q9N5M2">
    <property type="interactions" value="2195"/>
</dbReference>
<dbReference type="IntAct" id="Q9N5M2">
    <property type="interactions" value="5"/>
</dbReference>
<dbReference type="STRING" id="6239.H20J04.5.1"/>
<dbReference type="iPTMnet" id="Q9N5M2"/>
<dbReference type="PaxDb" id="6239-H20J04.5"/>
<dbReference type="PeptideAtlas" id="Q9N5M2"/>
<dbReference type="EnsemblMetazoa" id="H20J04.5.1">
    <property type="protein sequence ID" value="H20J04.5.1"/>
    <property type="gene ID" value="WBGene00019220"/>
</dbReference>
<dbReference type="GeneID" id="173768"/>
<dbReference type="KEGG" id="cel:CELE_H20J04.5"/>
<dbReference type="AGR" id="WB:WBGene00019220"/>
<dbReference type="CTD" id="173768"/>
<dbReference type="WormBase" id="H20J04.5">
    <property type="protein sequence ID" value="CE23815"/>
    <property type="gene ID" value="WBGene00019220"/>
    <property type="gene designation" value="pfd-2"/>
</dbReference>
<dbReference type="eggNOG" id="KOG4098">
    <property type="taxonomic scope" value="Eukaryota"/>
</dbReference>
<dbReference type="GeneTree" id="ENSGT00390000009272"/>
<dbReference type="HOGENOM" id="CLU_113004_0_1_1"/>
<dbReference type="InParanoid" id="Q9N5M2"/>
<dbReference type="OMA" id="CFKMIGG"/>
<dbReference type="OrthoDB" id="29646at2759"/>
<dbReference type="PhylomeDB" id="Q9N5M2"/>
<dbReference type="SignaLink" id="Q9N5M2"/>
<dbReference type="PRO" id="PR:Q9N5M2"/>
<dbReference type="Proteomes" id="UP000001940">
    <property type="component" value="Chromosome II"/>
</dbReference>
<dbReference type="Bgee" id="WBGene00019220">
    <property type="expression patterns" value="Expressed in germ line (C elegans) and 4 other cell types or tissues"/>
</dbReference>
<dbReference type="GO" id="GO:0005737">
    <property type="term" value="C:cytoplasm"/>
    <property type="evidence" value="ECO:0000318"/>
    <property type="project" value="GO_Central"/>
</dbReference>
<dbReference type="GO" id="GO:0005783">
    <property type="term" value="C:endoplasmic reticulum"/>
    <property type="evidence" value="ECO:0007005"/>
    <property type="project" value="WormBase"/>
</dbReference>
<dbReference type="GO" id="GO:0016272">
    <property type="term" value="C:prefoldin complex"/>
    <property type="evidence" value="ECO:0007669"/>
    <property type="project" value="InterPro"/>
</dbReference>
<dbReference type="GO" id="GO:0030017">
    <property type="term" value="C:sarcomere"/>
    <property type="evidence" value="ECO:0007005"/>
    <property type="project" value="WormBase"/>
</dbReference>
<dbReference type="GO" id="GO:0055120">
    <property type="term" value="C:striated muscle dense body"/>
    <property type="evidence" value="ECO:0007005"/>
    <property type="project" value="WormBase"/>
</dbReference>
<dbReference type="GO" id="GO:0044183">
    <property type="term" value="F:protein folding chaperone"/>
    <property type="evidence" value="ECO:0000318"/>
    <property type="project" value="GO_Central"/>
</dbReference>
<dbReference type="GO" id="GO:0051082">
    <property type="term" value="F:unfolded protein binding"/>
    <property type="evidence" value="ECO:0007669"/>
    <property type="project" value="InterPro"/>
</dbReference>
<dbReference type="GO" id="GO:0006457">
    <property type="term" value="P:protein folding"/>
    <property type="evidence" value="ECO:0000318"/>
    <property type="project" value="GO_Central"/>
</dbReference>
<dbReference type="CDD" id="cd23163">
    <property type="entry name" value="Prefoldin_2"/>
    <property type="match status" value="1"/>
</dbReference>
<dbReference type="Gene3D" id="1.10.287.370">
    <property type="match status" value="1"/>
</dbReference>
<dbReference type="InterPro" id="IPR027235">
    <property type="entry name" value="PFD2"/>
</dbReference>
<dbReference type="InterPro" id="IPR002777">
    <property type="entry name" value="PFD_beta-like"/>
</dbReference>
<dbReference type="InterPro" id="IPR009053">
    <property type="entry name" value="Prefoldin"/>
</dbReference>
<dbReference type="PANTHER" id="PTHR13303">
    <property type="entry name" value="PREFOLDIN SUBUNIT 2"/>
    <property type="match status" value="1"/>
</dbReference>
<dbReference type="Pfam" id="PF01920">
    <property type="entry name" value="Prefoldin_2"/>
    <property type="match status" value="1"/>
</dbReference>
<dbReference type="SUPFAM" id="SSF46579">
    <property type="entry name" value="Prefoldin"/>
    <property type="match status" value="1"/>
</dbReference>
<keyword id="KW-0143">Chaperone</keyword>
<keyword id="KW-1185">Reference proteome</keyword>
<gene>
    <name evidence="3" type="primary">pfd-2</name>
    <name evidence="3" type="synonym">tag-355</name>
    <name evidence="3" type="ORF">H20J04.5</name>
</gene>
<sequence>MSAAQTAAATPAEQEEQRKVVEKFKALRDQQQDIAAEVTRIEEERREFGRVLEVIKDLEPDQKCFRLISDTLVEYTVKDVIPDLQNNIANLTIVSKQLNDQLVEKGKELNTHKTTHNIRLLTEKESAELRKAEALGQLPKA</sequence>
<comment type="function">
    <text evidence="1">Binds specifically to cytosolic chaperonin (c-CPN) and transfers target proteins to it. Binds to nascent polypeptide chain and promotes folding in an environment in which there are many competing pathways for nonnative proteins (By similarity).</text>
</comment>
<comment type="subunit">
    <text evidence="1">Heterohexamer of two PFD-alpha type and four PFD-beta type subunits.</text>
</comment>
<comment type="similarity">
    <text evidence="2">Belongs to the prefoldin subunit beta family.</text>
</comment>
<evidence type="ECO:0000250" key="1"/>
<evidence type="ECO:0000305" key="2"/>
<evidence type="ECO:0000312" key="3">
    <source>
        <dbReference type="WormBase" id="H20J04.5"/>
    </source>
</evidence>
<proteinExistence type="inferred from homology"/>
<reference key="1">
    <citation type="journal article" date="1998" name="Science">
        <title>Genome sequence of the nematode C. elegans: a platform for investigating biology.</title>
        <authorList>
            <consortium name="The C. elegans sequencing consortium"/>
        </authorList>
    </citation>
    <scope>NUCLEOTIDE SEQUENCE [LARGE SCALE GENOMIC DNA]</scope>
    <source>
        <strain>Bristol N2</strain>
    </source>
</reference>
<protein>
    <recommendedName>
        <fullName>Prefoldin subunit 2</fullName>
    </recommendedName>
</protein>
<accession>Q9N5M2</accession>
<name>PFD2_CAEEL</name>
<organism>
    <name type="scientific">Caenorhabditis elegans</name>
    <dbReference type="NCBI Taxonomy" id="6239"/>
    <lineage>
        <taxon>Eukaryota</taxon>
        <taxon>Metazoa</taxon>
        <taxon>Ecdysozoa</taxon>
        <taxon>Nematoda</taxon>
        <taxon>Chromadorea</taxon>
        <taxon>Rhabditida</taxon>
        <taxon>Rhabditina</taxon>
        <taxon>Rhabditomorpha</taxon>
        <taxon>Rhabditoidea</taxon>
        <taxon>Rhabditidae</taxon>
        <taxon>Peloderinae</taxon>
        <taxon>Caenorhabditis</taxon>
    </lineage>
</organism>